<sequence>MAKIQARTQNEGPEDGLREKMIAINRVTKVVKGGRILGFAALTVVGDGDGRVGMGKGKSKEVPAAVQKAMEEARRNLAKISIKNGTLHHRVTGHWGAASVVMIPAPKGTGIIAGGPMRAVFEVMGITDIVAKSHGSSNPYNMVRATLDGLKNSTTASEVAAKRGLTVEEIFA</sequence>
<keyword id="KW-0687">Ribonucleoprotein</keyword>
<keyword id="KW-0689">Ribosomal protein</keyword>
<keyword id="KW-0694">RNA-binding</keyword>
<keyword id="KW-0699">rRNA-binding</keyword>
<protein>
    <recommendedName>
        <fullName evidence="1">Small ribosomal subunit protein uS5</fullName>
    </recommendedName>
    <alternativeName>
        <fullName evidence="2">30S ribosomal protein S5</fullName>
    </alternativeName>
</protein>
<organism>
    <name type="scientific">Variovorax paradoxus (strain S110)</name>
    <dbReference type="NCBI Taxonomy" id="543728"/>
    <lineage>
        <taxon>Bacteria</taxon>
        <taxon>Pseudomonadati</taxon>
        <taxon>Pseudomonadota</taxon>
        <taxon>Betaproteobacteria</taxon>
        <taxon>Burkholderiales</taxon>
        <taxon>Comamonadaceae</taxon>
        <taxon>Variovorax</taxon>
    </lineage>
</organism>
<name>RS5_VARPS</name>
<comment type="function">
    <text evidence="1">With S4 and S12 plays an important role in translational accuracy.</text>
</comment>
<comment type="function">
    <text evidence="1">Located at the back of the 30S subunit body where it stabilizes the conformation of the head with respect to the body.</text>
</comment>
<comment type="subunit">
    <text evidence="1">Part of the 30S ribosomal subunit. Contacts proteins S4 and S8.</text>
</comment>
<comment type="domain">
    <text>The N-terminal domain interacts with the head of the 30S subunit; the C-terminal domain interacts with the body and contacts protein S4. The interaction surface between S4 and S5 is involved in control of translational fidelity.</text>
</comment>
<comment type="similarity">
    <text evidence="1">Belongs to the universal ribosomal protein uS5 family.</text>
</comment>
<dbReference type="EMBL" id="CP001635">
    <property type="protein sequence ID" value="ACS21655.1"/>
    <property type="molecule type" value="Genomic_DNA"/>
</dbReference>
<dbReference type="SMR" id="C5CQ83"/>
<dbReference type="STRING" id="543728.Vapar_5053"/>
<dbReference type="KEGG" id="vap:Vapar_5053"/>
<dbReference type="eggNOG" id="COG0098">
    <property type="taxonomic scope" value="Bacteria"/>
</dbReference>
<dbReference type="HOGENOM" id="CLU_065898_2_2_4"/>
<dbReference type="OrthoDB" id="9809045at2"/>
<dbReference type="GO" id="GO:0015935">
    <property type="term" value="C:small ribosomal subunit"/>
    <property type="evidence" value="ECO:0007669"/>
    <property type="project" value="InterPro"/>
</dbReference>
<dbReference type="GO" id="GO:0019843">
    <property type="term" value="F:rRNA binding"/>
    <property type="evidence" value="ECO:0007669"/>
    <property type="project" value="UniProtKB-UniRule"/>
</dbReference>
<dbReference type="GO" id="GO:0003735">
    <property type="term" value="F:structural constituent of ribosome"/>
    <property type="evidence" value="ECO:0007669"/>
    <property type="project" value="InterPro"/>
</dbReference>
<dbReference type="GO" id="GO:0006412">
    <property type="term" value="P:translation"/>
    <property type="evidence" value="ECO:0007669"/>
    <property type="project" value="UniProtKB-UniRule"/>
</dbReference>
<dbReference type="FunFam" id="3.30.160.20:FF:000001">
    <property type="entry name" value="30S ribosomal protein S5"/>
    <property type="match status" value="1"/>
</dbReference>
<dbReference type="FunFam" id="3.30.230.10:FF:000002">
    <property type="entry name" value="30S ribosomal protein S5"/>
    <property type="match status" value="1"/>
</dbReference>
<dbReference type="Gene3D" id="3.30.160.20">
    <property type="match status" value="1"/>
</dbReference>
<dbReference type="Gene3D" id="3.30.230.10">
    <property type="match status" value="1"/>
</dbReference>
<dbReference type="HAMAP" id="MF_01307_B">
    <property type="entry name" value="Ribosomal_uS5_B"/>
    <property type="match status" value="1"/>
</dbReference>
<dbReference type="InterPro" id="IPR020568">
    <property type="entry name" value="Ribosomal_Su5_D2-typ_SF"/>
</dbReference>
<dbReference type="InterPro" id="IPR000851">
    <property type="entry name" value="Ribosomal_uS5"/>
</dbReference>
<dbReference type="InterPro" id="IPR005712">
    <property type="entry name" value="Ribosomal_uS5_bac-type"/>
</dbReference>
<dbReference type="InterPro" id="IPR005324">
    <property type="entry name" value="Ribosomal_uS5_C"/>
</dbReference>
<dbReference type="InterPro" id="IPR013810">
    <property type="entry name" value="Ribosomal_uS5_N"/>
</dbReference>
<dbReference type="InterPro" id="IPR018192">
    <property type="entry name" value="Ribosomal_uS5_N_CS"/>
</dbReference>
<dbReference type="InterPro" id="IPR014721">
    <property type="entry name" value="Ribsml_uS5_D2-typ_fold_subgr"/>
</dbReference>
<dbReference type="NCBIfam" id="TIGR01021">
    <property type="entry name" value="rpsE_bact"/>
    <property type="match status" value="1"/>
</dbReference>
<dbReference type="PANTHER" id="PTHR48277">
    <property type="entry name" value="MITOCHONDRIAL RIBOSOMAL PROTEIN S5"/>
    <property type="match status" value="1"/>
</dbReference>
<dbReference type="PANTHER" id="PTHR48277:SF1">
    <property type="entry name" value="MITOCHONDRIAL RIBOSOMAL PROTEIN S5"/>
    <property type="match status" value="1"/>
</dbReference>
<dbReference type="Pfam" id="PF00333">
    <property type="entry name" value="Ribosomal_S5"/>
    <property type="match status" value="1"/>
</dbReference>
<dbReference type="Pfam" id="PF03719">
    <property type="entry name" value="Ribosomal_S5_C"/>
    <property type="match status" value="1"/>
</dbReference>
<dbReference type="SUPFAM" id="SSF54768">
    <property type="entry name" value="dsRNA-binding domain-like"/>
    <property type="match status" value="1"/>
</dbReference>
<dbReference type="SUPFAM" id="SSF54211">
    <property type="entry name" value="Ribosomal protein S5 domain 2-like"/>
    <property type="match status" value="1"/>
</dbReference>
<dbReference type="PROSITE" id="PS00585">
    <property type="entry name" value="RIBOSOMAL_S5"/>
    <property type="match status" value="1"/>
</dbReference>
<dbReference type="PROSITE" id="PS50881">
    <property type="entry name" value="S5_DSRBD"/>
    <property type="match status" value="1"/>
</dbReference>
<reference key="1">
    <citation type="journal article" date="2011" name="J. Bacteriol.">
        <title>Complete genome sequence of the metabolically versatile plant growth-promoting endophyte, Variovorax paradoxus S110.</title>
        <authorList>
            <person name="Han J.I."/>
            <person name="Choi H.K."/>
            <person name="Lee S.W."/>
            <person name="Orwin P.M."/>
            <person name="Kim J."/>
            <person name="Laroe S.L."/>
            <person name="Kim T.G."/>
            <person name="O'Neil J."/>
            <person name="Leadbetter J.R."/>
            <person name="Lee S.Y."/>
            <person name="Hur C.G."/>
            <person name="Spain J.C."/>
            <person name="Ovchinnikova G."/>
            <person name="Goodwin L."/>
            <person name="Han C."/>
        </authorList>
    </citation>
    <scope>NUCLEOTIDE SEQUENCE [LARGE SCALE GENOMIC DNA]</scope>
    <source>
        <strain>S110</strain>
    </source>
</reference>
<proteinExistence type="inferred from homology"/>
<feature type="chain" id="PRO_1000214328" description="Small ribosomal subunit protein uS5">
    <location>
        <begin position="1"/>
        <end position="172"/>
    </location>
</feature>
<feature type="domain" description="S5 DRBM" evidence="1">
    <location>
        <begin position="17"/>
        <end position="80"/>
    </location>
</feature>
<gene>
    <name evidence="1" type="primary">rpsE</name>
    <name type="ordered locus">Vapar_5053</name>
</gene>
<evidence type="ECO:0000255" key="1">
    <source>
        <dbReference type="HAMAP-Rule" id="MF_01307"/>
    </source>
</evidence>
<evidence type="ECO:0000305" key="2"/>
<accession>C5CQ83</accession>